<protein>
    <recommendedName>
        <fullName>ATP-dependent RNA helicase DDX1</fullName>
        <ecNumber>3.6.4.13</ecNumber>
    </recommendedName>
    <alternativeName>
        <fullName>DEAD box protein 1</fullName>
    </alternativeName>
</protein>
<organism>
    <name type="scientific">Bos taurus</name>
    <name type="common">Bovine</name>
    <dbReference type="NCBI Taxonomy" id="9913"/>
    <lineage>
        <taxon>Eukaryota</taxon>
        <taxon>Metazoa</taxon>
        <taxon>Chordata</taxon>
        <taxon>Craniata</taxon>
        <taxon>Vertebrata</taxon>
        <taxon>Euteleostomi</taxon>
        <taxon>Mammalia</taxon>
        <taxon>Eutheria</taxon>
        <taxon>Laurasiatheria</taxon>
        <taxon>Artiodactyla</taxon>
        <taxon>Ruminantia</taxon>
        <taxon>Pecora</taxon>
        <taxon>Bovidae</taxon>
        <taxon>Bovinae</taxon>
        <taxon>Bos</taxon>
    </lineage>
</organism>
<proteinExistence type="evidence at transcript level"/>
<accession>Q0IIK5</accession>
<keyword id="KW-0007">Acetylation</keyword>
<keyword id="KW-0010">Activator</keyword>
<keyword id="KW-0051">Antiviral defense</keyword>
<keyword id="KW-0067">ATP-binding</keyword>
<keyword id="KW-0963">Cytoplasm</keyword>
<keyword id="KW-0238">DNA-binding</keyword>
<keyword id="KW-0269">Exonuclease</keyword>
<keyword id="KW-0347">Helicase</keyword>
<keyword id="KW-0378">Hydrolase</keyword>
<keyword id="KW-0391">Immunity</keyword>
<keyword id="KW-0399">Innate immunity</keyword>
<keyword id="KW-1017">Isopeptide bond</keyword>
<keyword id="KW-0496">Mitochondrion</keyword>
<keyword id="KW-0507">mRNA processing</keyword>
<keyword id="KW-0540">Nuclease</keyword>
<keyword id="KW-0547">Nucleotide-binding</keyword>
<keyword id="KW-0539">Nucleus</keyword>
<keyword id="KW-0597">Phosphoprotein</keyword>
<keyword id="KW-1185">Reference proteome</keyword>
<keyword id="KW-0694">RNA-binding</keyword>
<keyword id="KW-0804">Transcription</keyword>
<keyword id="KW-0805">Transcription regulation</keyword>
<keyword id="KW-0819">tRNA processing</keyword>
<keyword id="KW-0832">Ubl conjugation</keyword>
<reference key="1">
    <citation type="submission" date="2006-08" db="EMBL/GenBank/DDBJ databases">
        <authorList>
            <consortium name="NIH - Mammalian Gene Collection (MGC) project"/>
        </authorList>
    </citation>
    <scope>NUCLEOTIDE SEQUENCE [LARGE SCALE MRNA]</scope>
    <source>
        <strain>Hereford</strain>
        <tissue>Hippocampus</tissue>
    </source>
</reference>
<feature type="chain" id="PRO_0000284075" description="ATP-dependent RNA helicase DDX1">
    <location>
        <begin position="1"/>
        <end position="740"/>
    </location>
</feature>
<feature type="domain" description="Helicase ATP-binding" evidence="3">
    <location>
        <begin position="2"/>
        <end position="428"/>
    </location>
</feature>
<feature type="domain" description="B30.2/SPRY" evidence="5">
    <location>
        <begin position="70"/>
        <end position="247"/>
    </location>
</feature>
<feature type="domain" description="Helicase C-terminal" evidence="4">
    <location>
        <begin position="493"/>
        <end position="681"/>
    </location>
</feature>
<feature type="region of interest" description="Necessary for interaction with RELA" evidence="2">
    <location>
        <begin position="1"/>
        <end position="525"/>
    </location>
</feature>
<feature type="region of interest" description="Interaction with dsRNA" evidence="1">
    <location>
        <begin position="1"/>
        <end position="448"/>
    </location>
</feature>
<feature type="region of interest" description="Necessary for interaction with HNRNPK" evidence="2">
    <location>
        <begin position="1"/>
        <end position="295"/>
    </location>
</feature>
<feature type="region of interest" description="Necessary for interaction with HNRNPK" evidence="2">
    <location>
        <begin position="525"/>
        <end position="740"/>
    </location>
</feature>
<feature type="short sequence motif" description="DEAD box" evidence="3">
    <location>
        <begin position="370"/>
        <end position="373"/>
    </location>
</feature>
<feature type="binding site" evidence="3">
    <location>
        <begin position="46"/>
        <end position="53"/>
    </location>
    <ligand>
        <name>ATP</name>
        <dbReference type="ChEBI" id="CHEBI:30616"/>
    </ligand>
</feature>
<feature type="modified residue" description="N6-acetyllysine" evidence="2">
    <location>
        <position position="239"/>
    </location>
</feature>
<feature type="modified residue" description="N6-acetyllysine" evidence="2">
    <location>
        <position position="268"/>
    </location>
</feature>
<feature type="modified residue" description="N6-acetyllysine; alternate" evidence="2">
    <location>
        <position position="281"/>
    </location>
</feature>
<feature type="modified residue" description="Phosphoserine" evidence="2">
    <location>
        <position position="481"/>
    </location>
</feature>
<feature type="cross-link" description="Glycyl lysine isopeptide (Lys-Gly) (interchain with G-Cter in SUMO2); alternate" evidence="2">
    <location>
        <position position="281"/>
    </location>
</feature>
<sequence>MAAFSEMGVMPEIAQAVEEMDWLLPTDIQAESIPLILGGGDVLMAAETGSGKTGAFSIPVIQIVYETLKDQQEGKKGKATIKTGASVLNKWQMNPYDRGSAFAIGSDGLCCQSREVKEWHGCRATKGLTKGKHYYEVSCHDQGLCRVGWSSMQASLDLGTDKFGFGFGGTGKKSHNKQFDNYGEEFTMHDTIGCYLDIDKGHVKFSKNGKDLGLAFEIPPHMKNQALFPACVLKNAELKFNFGEEEFKFPPKDGFVALSKAPESFVVKSQHTGSAQVAQTKFLPNAPKALIVEPSRELAEQTLNNVKQFKKYIDNPKLRELLIIGGVAARDQLSVLDNGVDIVVGTPGRLDDLVSTGKLNLSQVRFLVLDEADGLLSQGYSDFINRIHNQIPQITSDGKRLQVIVCSATLHSFDVKKLSEKIMHFPTWVDLKGEDSVPDTVHHVVVPVNPKTDRLWERLGKSHIRTDEVHAKDNTRPGANSPEMWSEAIKILKGEYAVRAIKEHKMDQAIIFCRTKIDCDNLEQYFMQQGGGPDKKGHQFSCVCLHGDRKPHERKQNLERFKKGDVRFLICTDVAARGIDIHGVPYVINVTLPDEKQNYVHRIGRVGRAERMGLAISLVATEKEKVWYHVCSSRGKGCYNTRLKEDGGCTIWYNEMQLLSEIEEHLNCTISQVEPDIKVPVDEFDGKVTYGQKRTLGGGNYKGHVDVLAPTVQELAALEKEAQTSFLHLGYLPNQLFRTF</sequence>
<gene>
    <name type="primary">DDX1</name>
</gene>
<evidence type="ECO:0000250" key="1">
    <source>
        <dbReference type="UniProtKB" id="Q91VR5"/>
    </source>
</evidence>
<evidence type="ECO:0000250" key="2">
    <source>
        <dbReference type="UniProtKB" id="Q92499"/>
    </source>
</evidence>
<evidence type="ECO:0000255" key="3">
    <source>
        <dbReference type="PROSITE-ProRule" id="PRU00541"/>
    </source>
</evidence>
<evidence type="ECO:0000255" key="4">
    <source>
        <dbReference type="PROSITE-ProRule" id="PRU00542"/>
    </source>
</evidence>
<evidence type="ECO:0000255" key="5">
    <source>
        <dbReference type="PROSITE-ProRule" id="PRU00548"/>
    </source>
</evidence>
<evidence type="ECO:0000305" key="6"/>
<dbReference type="EC" id="3.6.4.13"/>
<dbReference type="EMBL" id="BC122599">
    <property type="protein sequence ID" value="AAI22600.1"/>
    <property type="molecule type" value="mRNA"/>
</dbReference>
<dbReference type="RefSeq" id="NP_001068936.1">
    <property type="nucleotide sequence ID" value="NM_001075468.1"/>
</dbReference>
<dbReference type="RefSeq" id="XP_059747148.1">
    <property type="nucleotide sequence ID" value="XM_059891165.1"/>
</dbReference>
<dbReference type="SMR" id="Q0IIK5"/>
<dbReference type="FunCoup" id="Q0IIK5">
    <property type="interactions" value="3946"/>
</dbReference>
<dbReference type="STRING" id="9913.ENSBTAP00000013075"/>
<dbReference type="PaxDb" id="9913-ENSBTAP00000013075"/>
<dbReference type="PeptideAtlas" id="Q0IIK5"/>
<dbReference type="Ensembl" id="ENSBTAT00000099937.1">
    <property type="protein sequence ID" value="ENSBTAP00000091056.1"/>
    <property type="gene ID" value="ENSBTAG00000009906.7"/>
</dbReference>
<dbReference type="GeneID" id="510816"/>
<dbReference type="KEGG" id="bta:510816"/>
<dbReference type="CTD" id="1653"/>
<dbReference type="VEuPathDB" id="HostDB:ENSBTAG00000009906"/>
<dbReference type="VGNC" id="VGNC:27955">
    <property type="gene designation" value="DDX1"/>
</dbReference>
<dbReference type="eggNOG" id="KOG0349">
    <property type="taxonomic scope" value="Eukaryota"/>
</dbReference>
<dbReference type="GeneTree" id="ENSGT00940000155678"/>
<dbReference type="HOGENOM" id="CLU_016321_0_0_1"/>
<dbReference type="InParanoid" id="Q0IIK5"/>
<dbReference type="OMA" id="KRQQVKF"/>
<dbReference type="OrthoDB" id="1735at2759"/>
<dbReference type="TreeFam" id="TF106114"/>
<dbReference type="Proteomes" id="UP000009136">
    <property type="component" value="Chromosome 11"/>
</dbReference>
<dbReference type="Bgee" id="ENSBTAG00000009906">
    <property type="expression patterns" value="Expressed in triceps brachii and 106 other cell types or tissues"/>
</dbReference>
<dbReference type="GO" id="GO:0071920">
    <property type="term" value="C:cleavage body"/>
    <property type="evidence" value="ECO:0000250"/>
    <property type="project" value="UniProtKB"/>
</dbReference>
<dbReference type="GO" id="GO:0005737">
    <property type="term" value="C:cytoplasm"/>
    <property type="evidence" value="ECO:0000250"/>
    <property type="project" value="UniProtKB"/>
</dbReference>
<dbReference type="GO" id="GO:0010494">
    <property type="term" value="C:cytoplasmic stress granule"/>
    <property type="evidence" value="ECO:0000250"/>
    <property type="project" value="UniProtKB"/>
</dbReference>
<dbReference type="GO" id="GO:0005829">
    <property type="term" value="C:cytosol"/>
    <property type="evidence" value="ECO:0000250"/>
    <property type="project" value="UniProtKB"/>
</dbReference>
<dbReference type="GO" id="GO:0005739">
    <property type="term" value="C:mitochondrion"/>
    <property type="evidence" value="ECO:0000250"/>
    <property type="project" value="UniProtKB"/>
</dbReference>
<dbReference type="GO" id="GO:0005730">
    <property type="term" value="C:nucleolus"/>
    <property type="evidence" value="ECO:0000318"/>
    <property type="project" value="GO_Central"/>
</dbReference>
<dbReference type="GO" id="GO:0005634">
    <property type="term" value="C:nucleus"/>
    <property type="evidence" value="ECO:0000250"/>
    <property type="project" value="UniProtKB"/>
</dbReference>
<dbReference type="GO" id="GO:0072669">
    <property type="term" value="C:tRNA-splicing ligase complex"/>
    <property type="evidence" value="ECO:0000250"/>
    <property type="project" value="UniProtKB"/>
</dbReference>
<dbReference type="GO" id="GO:0005524">
    <property type="term" value="F:ATP binding"/>
    <property type="evidence" value="ECO:0007669"/>
    <property type="project" value="UniProtKB-KW"/>
</dbReference>
<dbReference type="GO" id="GO:0016887">
    <property type="term" value="F:ATP hydrolysis activity"/>
    <property type="evidence" value="ECO:0007669"/>
    <property type="project" value="RHEA"/>
</dbReference>
<dbReference type="GO" id="GO:0003682">
    <property type="term" value="F:chromatin binding"/>
    <property type="evidence" value="ECO:0000250"/>
    <property type="project" value="UniProtKB"/>
</dbReference>
<dbReference type="GO" id="GO:0003677">
    <property type="term" value="F:DNA binding"/>
    <property type="evidence" value="ECO:0007669"/>
    <property type="project" value="UniProtKB-KW"/>
</dbReference>
<dbReference type="GO" id="GO:0033677">
    <property type="term" value="F:DNA/RNA helicase activity"/>
    <property type="evidence" value="ECO:0000250"/>
    <property type="project" value="UniProtKB"/>
</dbReference>
<dbReference type="GO" id="GO:0004527">
    <property type="term" value="F:exonuclease activity"/>
    <property type="evidence" value="ECO:0007669"/>
    <property type="project" value="UniProtKB-KW"/>
</dbReference>
<dbReference type="GO" id="GO:0003729">
    <property type="term" value="F:mRNA binding"/>
    <property type="evidence" value="ECO:0000318"/>
    <property type="project" value="GO_Central"/>
</dbReference>
<dbReference type="GO" id="GO:0004518">
    <property type="term" value="F:nuclease activity"/>
    <property type="evidence" value="ECO:0000250"/>
    <property type="project" value="UniProtKB"/>
</dbReference>
<dbReference type="GO" id="GO:0008143">
    <property type="term" value="F:poly(A) binding"/>
    <property type="evidence" value="ECO:0000250"/>
    <property type="project" value="UniProtKB"/>
</dbReference>
<dbReference type="GO" id="GO:0003724">
    <property type="term" value="F:RNA helicase activity"/>
    <property type="evidence" value="ECO:0000250"/>
    <property type="project" value="UniProtKB"/>
</dbReference>
<dbReference type="GO" id="GO:0003712">
    <property type="term" value="F:transcription coregulator activity"/>
    <property type="evidence" value="ECO:0000250"/>
    <property type="project" value="UniProtKB"/>
</dbReference>
<dbReference type="GO" id="GO:0051607">
    <property type="term" value="P:defense response to virus"/>
    <property type="evidence" value="ECO:0007669"/>
    <property type="project" value="UniProtKB-KW"/>
</dbReference>
<dbReference type="GO" id="GO:0006302">
    <property type="term" value="P:double-strand break repair"/>
    <property type="evidence" value="ECO:0000250"/>
    <property type="project" value="UniProtKB"/>
</dbReference>
<dbReference type="GO" id="GO:0045087">
    <property type="term" value="P:innate immune response"/>
    <property type="evidence" value="ECO:0007669"/>
    <property type="project" value="UniProtKB-KW"/>
</dbReference>
<dbReference type="GO" id="GO:0006397">
    <property type="term" value="P:mRNA processing"/>
    <property type="evidence" value="ECO:0007669"/>
    <property type="project" value="UniProtKB-KW"/>
</dbReference>
<dbReference type="GO" id="GO:0043123">
    <property type="term" value="P:positive regulation of canonical NF-kappaB signal transduction"/>
    <property type="evidence" value="ECO:0000250"/>
    <property type="project" value="UniProtKB"/>
</dbReference>
<dbReference type="GO" id="GO:0006364">
    <property type="term" value="P:rRNA processing"/>
    <property type="evidence" value="ECO:0000318"/>
    <property type="project" value="GO_Central"/>
</dbReference>
<dbReference type="GO" id="GO:0006388">
    <property type="term" value="P:tRNA splicing, via endonucleolytic cleavage and ligation"/>
    <property type="evidence" value="ECO:0000250"/>
    <property type="project" value="UniProtKB"/>
</dbReference>
<dbReference type="CDD" id="cd17938">
    <property type="entry name" value="DEADc_DDX1"/>
    <property type="match status" value="1"/>
</dbReference>
<dbReference type="CDD" id="cd18787">
    <property type="entry name" value="SF2_C_DEAD"/>
    <property type="match status" value="1"/>
</dbReference>
<dbReference type="CDD" id="cd12873">
    <property type="entry name" value="SPRY_DDX1"/>
    <property type="match status" value="1"/>
</dbReference>
<dbReference type="FunFam" id="2.60.120.920:FF:000013">
    <property type="entry name" value="ATP-dependent RNA helicase DDX1"/>
    <property type="match status" value="1"/>
</dbReference>
<dbReference type="FunFam" id="3.40.50.300:FF:000652">
    <property type="entry name" value="ATP-dependent RNA helicase DDX1"/>
    <property type="match status" value="1"/>
</dbReference>
<dbReference type="FunFam" id="3.40.50.300:FF:000708">
    <property type="entry name" value="ATP-dependent RNA helicase DDX1"/>
    <property type="match status" value="1"/>
</dbReference>
<dbReference type="FunFam" id="3.40.50.300:FF:000716">
    <property type="entry name" value="ATP-dependent RNA helicase DDX1"/>
    <property type="match status" value="1"/>
</dbReference>
<dbReference type="Gene3D" id="2.60.120.920">
    <property type="match status" value="1"/>
</dbReference>
<dbReference type="Gene3D" id="3.40.50.300">
    <property type="entry name" value="P-loop containing nucleotide triphosphate hydrolases"/>
    <property type="match status" value="3"/>
</dbReference>
<dbReference type="InterPro" id="IPR001870">
    <property type="entry name" value="B30.2/SPRY"/>
</dbReference>
<dbReference type="InterPro" id="IPR043136">
    <property type="entry name" value="B30.2/SPRY_sf"/>
</dbReference>
<dbReference type="InterPro" id="IPR013320">
    <property type="entry name" value="ConA-like_dom_sf"/>
</dbReference>
<dbReference type="InterPro" id="IPR011545">
    <property type="entry name" value="DEAD/DEAH_box_helicase_dom"/>
</dbReference>
<dbReference type="InterPro" id="IPR014001">
    <property type="entry name" value="Helicase_ATP-bd"/>
</dbReference>
<dbReference type="InterPro" id="IPR001650">
    <property type="entry name" value="Helicase_C-like"/>
</dbReference>
<dbReference type="InterPro" id="IPR027417">
    <property type="entry name" value="P-loop_NTPase"/>
</dbReference>
<dbReference type="InterPro" id="IPR014014">
    <property type="entry name" value="RNA_helicase_DEAD_Q_motif"/>
</dbReference>
<dbReference type="InterPro" id="IPR003877">
    <property type="entry name" value="SPRY_dom"/>
</dbReference>
<dbReference type="PANTHER" id="PTHR24031">
    <property type="entry name" value="RNA HELICASE"/>
    <property type="match status" value="1"/>
</dbReference>
<dbReference type="Pfam" id="PF00270">
    <property type="entry name" value="DEAD"/>
    <property type="match status" value="2"/>
</dbReference>
<dbReference type="Pfam" id="PF00271">
    <property type="entry name" value="Helicase_C"/>
    <property type="match status" value="1"/>
</dbReference>
<dbReference type="Pfam" id="PF00622">
    <property type="entry name" value="SPRY"/>
    <property type="match status" value="1"/>
</dbReference>
<dbReference type="SMART" id="SM00487">
    <property type="entry name" value="DEXDc"/>
    <property type="match status" value="1"/>
</dbReference>
<dbReference type="SMART" id="SM00490">
    <property type="entry name" value="HELICc"/>
    <property type="match status" value="1"/>
</dbReference>
<dbReference type="SMART" id="SM00449">
    <property type="entry name" value="SPRY"/>
    <property type="match status" value="1"/>
</dbReference>
<dbReference type="SUPFAM" id="SSF49899">
    <property type="entry name" value="Concanavalin A-like lectins/glucanases"/>
    <property type="match status" value="1"/>
</dbReference>
<dbReference type="SUPFAM" id="SSF52540">
    <property type="entry name" value="P-loop containing nucleoside triphosphate hydrolases"/>
    <property type="match status" value="2"/>
</dbReference>
<dbReference type="PROSITE" id="PS50188">
    <property type="entry name" value="B302_SPRY"/>
    <property type="match status" value="1"/>
</dbReference>
<dbReference type="PROSITE" id="PS51192">
    <property type="entry name" value="HELICASE_ATP_BIND_1"/>
    <property type="match status" value="2"/>
</dbReference>
<dbReference type="PROSITE" id="PS51194">
    <property type="entry name" value="HELICASE_CTER"/>
    <property type="match status" value="1"/>
</dbReference>
<dbReference type="PROSITE" id="PS51195">
    <property type="entry name" value="Q_MOTIF"/>
    <property type="match status" value="1"/>
</dbReference>
<name>DDX1_BOVIN</name>
<comment type="function">
    <text evidence="1 2">Acts as an ATP-dependent RNA helicase, able to unwind both RNA-RNA and RNA-DNA duplexes. Possesses 5' single-stranded RNA overhang nuclease activity. Possesses ATPase activity on various RNA, but not DNA polynucleotides. May play a role in RNA clearance at DNA double-strand breaks (DSBs), thereby facilitating the template-guided repair of transcriptionally active regions of the genome. Together with RELA, acts as a coactivator to enhance NF-kappa-B-mediated transcriptional activation. Acts as a positive transcriptional regulator of cyclin CCND2 expression. Binds to the cyclin CCND2 promoter region. Associates with chromatin at the NF-kappa-B promoter region via association with RELA. Binds to poly(A) RNA. May be involved in 3'-end cleavage and polyadenylation of pre-mRNAs. Component of the tRNA-splicing ligase complex required to facilitate the enzymatic turnover of catalytic subunit RTCB: together with archease (ZBTB8OS), acts by facilitating the guanylylation of RTCB, a key intermediate step in tRNA ligation. Component of a multi-helicase-TICAM1 complex that acts as a cytoplasmic sensor of viral double-stranded RNA (dsRNA) and plays a role in the activation of a cascade of antiviral responses including the induction of pro-inflammatory cytokines via the adapter molecule TICAM1. Specifically binds (via helicase ATP-binding domain) on both short and long poly(I:C) dsRNA (By similarity).</text>
</comment>
<comment type="catalytic activity">
    <reaction>
        <text>ATP + H2O = ADP + phosphate + H(+)</text>
        <dbReference type="Rhea" id="RHEA:13065"/>
        <dbReference type="ChEBI" id="CHEBI:15377"/>
        <dbReference type="ChEBI" id="CHEBI:15378"/>
        <dbReference type="ChEBI" id="CHEBI:30616"/>
        <dbReference type="ChEBI" id="CHEBI:43474"/>
        <dbReference type="ChEBI" id="CHEBI:456216"/>
        <dbReference type="EC" id="3.6.4.13"/>
    </reaction>
</comment>
<comment type="subunit">
    <text evidence="1 2">Found in a multi-helicase-TICAM1 complex at least composed of DHX36, DDX1, DDX21 and TICAM1; this complex exists in resting cells with or without poly(I:C) RNA ligand stimulation (By similarity). Interacts with DHX36 (By similarity). Interacts (via B30.2/SPRY domain) with DDX21 (via N-terminus); this interaction serves as bridges to TICAM1 (By similarity). Interacts with FAM98A (via N- and C-terminus) (By similarity). Interacts with PHF5A (via C-terminus) (By similarity). Interacts with MBNL1 (By similarity). Interacts with CSTF2 (By similarity). Interacts with HNRNPK (By similarity). Interacts with ATM (By similarity). Interacts with RELA (via C-terminus) (By similarity). Component of the tRNA-splicing ligase complex (By similarity). Interacts with PQBP1 (By similarity). Interacts with ERCC6 (By similarity).</text>
</comment>
<comment type="subcellular location">
    <subcellularLocation>
        <location evidence="2">Nucleus</location>
    </subcellularLocation>
    <subcellularLocation>
        <location evidence="2">Cytoplasm</location>
    </subcellularLocation>
    <subcellularLocation>
        <location evidence="2">Cytoplasmic granule</location>
    </subcellularLocation>
    <subcellularLocation>
        <location evidence="1">Cytoplasm</location>
        <location evidence="1">Cytosol</location>
    </subcellularLocation>
    <subcellularLocation>
        <location evidence="1">Mitochondrion</location>
    </subcellularLocation>
    <text evidence="1 2">Localized with MBNL1, TIAL1 and YBX1 in stress granules upon stress. Localized with CSTF2 in cleavage bodies. Forms large aggregates called DDX1 bodies. Relocalized into multiple foci (IR-induced foci or IRIF) after IR treatment, a process that depends on the presence of chromosomal DNA and/or RNA-DNA duplexes. Relocalized at sites of DNA double-strand breaks (DSBs) in an ATM-dependent manner after IR treatment. Colocalized with RELA in the nucleus upon TNF-alpha induction. Enters into the nucleus in case of active transcription while it accumulates in cytosol when transcription level is low. Colocalizes in the cytosol with DDX21, DHX36 and TICAM1. Colocalizes in the mitochondria with TICAM1 and poly(I:C) RNA ligand. The multi-helicase-TICAM1 complex may translocate to the mitochondria upon poly(I:C) stimulation (By similarity).</text>
</comment>
<comment type="domain">
    <text evidence="2">The helicase domain is involved in the stimulation of RELA transcriptional activity.</text>
</comment>
<comment type="PTM">
    <text evidence="2">Phosphorylated by ATM kinase; phosphorylation is increased in response to ionizing radiation (IR).</text>
</comment>
<comment type="similarity">
    <text evidence="6">Belongs to the DEAD box helicase family. DDX1 subfamily.</text>
</comment>